<name>NITSS_MICS3</name>
<evidence type="ECO:0000269" key="1">
    <source>
    </source>
</evidence>
<evidence type="ECO:0000269" key="2">
    <source>
    </source>
</evidence>
<evidence type="ECO:0000269" key="3">
    <source>
    </source>
</evidence>
<evidence type="ECO:0000303" key="4">
    <source>
    </source>
</evidence>
<evidence type="ECO:0000303" key="5">
    <source>
    </source>
</evidence>
<evidence type="ECO:0000303" key="6">
    <source>
    </source>
</evidence>
<evidence type="ECO:0000305" key="7"/>
<evidence type="ECO:0000305" key="8">
    <source>
    </source>
</evidence>
<evidence type="ECO:0000305" key="9">
    <source>
    </source>
</evidence>
<evidence type="ECO:0000312" key="10">
    <source>
        <dbReference type="EMBL" id="EEP73337.1"/>
    </source>
</evidence>
<evidence type="ECO:0007744" key="11">
    <source>
        <dbReference type="PDB" id="3MXL"/>
    </source>
</evidence>
<evidence type="ECO:0007829" key="12">
    <source>
        <dbReference type="PDB" id="3MXL"/>
    </source>
</evidence>
<accession>C4RPA1</accession>
<accession>B5APQ9</accession>
<proteinExistence type="evidence at protein level"/>
<comment type="function">
    <text evidence="1 2 3">Nitrososynthase involved in the biosynthesis of everninomicin, a broad spectrum orthosomycin antibiotic (PubMed:18983146). Catalyzes the double-oxidation of TDP-L-evernosamine to TDP-L-evernitrosose (PubMed:18983146, PubMed:20866105, PubMed:23885759). The enzyme first oxidizes the substrate to a transient hydroxylamino intermediate, which is then further oxidized to nitroso sugar (PubMed:18983146, PubMed:20866105, PubMed:23885759). The nitroso group is probably spontaneously oxidized giving TDP-L-evernitrose (PubMed:18983146). In vitro, catalyzes the double-oxidation of TDP-L-epi-vancosamine to TDP-L-epi-vancosonitrose (PubMed:18983146, PubMed:20866105, PubMed:23885759). Can also use biosynthetic progenitors of TDP-L-epi-vancosamine, but progenitors solely undergo single-oxidation reactions and terminate in the hydroxylamine oxidation state (PubMed:20866105).</text>
</comment>
<comment type="catalytic activity">
    <reaction evidence="1 2 3">
        <text>dTDP-beta-L-evernosamine + 2 NADPH + 2 O2 + H(+) = dTDP-2,3,6-trideoxy-3-C-methyl-4-O-methyl-3-nitroso-beta-L-arabino-hexopyranose + 2 NADP(+) + 3 H2O</text>
        <dbReference type="Rhea" id="RHEA:40555"/>
        <dbReference type="ChEBI" id="CHEBI:15377"/>
        <dbReference type="ChEBI" id="CHEBI:15378"/>
        <dbReference type="ChEBI" id="CHEBI:15379"/>
        <dbReference type="ChEBI" id="CHEBI:57783"/>
        <dbReference type="ChEBI" id="CHEBI:58349"/>
        <dbReference type="ChEBI" id="CHEBI:77142"/>
        <dbReference type="ChEBI" id="CHEBI:77144"/>
        <dbReference type="EC" id="1.14.13.187"/>
    </reaction>
    <physiologicalReaction direction="left-to-right" evidence="1 2 3">
        <dbReference type="Rhea" id="RHEA:40556"/>
    </physiologicalReaction>
</comment>
<comment type="catalytic activity">
    <reaction evidence="1 2 3">
        <text>dTDP-beta-L-evernosamine + NADPH + O2 = dTDP-N-hydroxy-beta-L-evernosamine + NADP(+) + H2O</text>
        <dbReference type="Rhea" id="RHEA:40559"/>
        <dbReference type="ChEBI" id="CHEBI:15377"/>
        <dbReference type="ChEBI" id="CHEBI:15379"/>
        <dbReference type="ChEBI" id="CHEBI:57783"/>
        <dbReference type="ChEBI" id="CHEBI:58349"/>
        <dbReference type="ChEBI" id="CHEBI:77143"/>
        <dbReference type="ChEBI" id="CHEBI:77144"/>
    </reaction>
    <physiologicalReaction direction="left-to-right" evidence="1 2 3">
        <dbReference type="Rhea" id="RHEA:40560"/>
    </physiologicalReaction>
</comment>
<comment type="catalytic activity">
    <reaction evidence="1 2 3">
        <text>dTDP-N-hydroxy-beta-L-evernosamine + NADPH + O2 + H(+) = dTDP-2,3,6-trideoxy-3-C-methyl-4-O-methyl-3-nitroso-beta-L-arabino-hexopyranose + NADP(+) + 2 H2O</text>
        <dbReference type="Rhea" id="RHEA:40563"/>
        <dbReference type="ChEBI" id="CHEBI:15377"/>
        <dbReference type="ChEBI" id="CHEBI:15378"/>
        <dbReference type="ChEBI" id="CHEBI:15379"/>
        <dbReference type="ChEBI" id="CHEBI:57783"/>
        <dbReference type="ChEBI" id="CHEBI:58349"/>
        <dbReference type="ChEBI" id="CHEBI:77142"/>
        <dbReference type="ChEBI" id="CHEBI:77143"/>
    </reaction>
    <physiologicalReaction direction="left-to-right" evidence="1 2 3">
        <dbReference type="Rhea" id="RHEA:40564"/>
    </physiologicalReaction>
</comment>
<comment type="cofactor">
    <cofactor evidence="1 2 3 9">
        <name>FAD</name>
        <dbReference type="ChEBI" id="CHEBI:57692"/>
    </cofactor>
</comment>
<comment type="pathway">
    <text evidence="8">Antibiotic biosynthesis.</text>
</comment>
<comment type="subunit">
    <text evidence="2">Homotetramer.</text>
</comment>
<comment type="miscellaneous">
    <text evidence="1 2 3">The nitrososynthase activity was originally established using as the substrate TDP-L-epi-vancosamine, which is a biosynthetic precursor to the expected substrate, TDP-L-evernosamine (PubMed:18983146, PubMed:20866105). The true substrate is presumably TDP-L-evernosamine, which differs from TDP-L-epi-vancosamine by 4-O-methylation (PubMed:23885759).</text>
</comment>
<comment type="similarity">
    <text evidence="7">Belongs to the acyl-CoA dehydrogenase family.</text>
</comment>
<keyword id="KW-0002">3D-structure</keyword>
<keyword id="KW-0045">Antibiotic biosynthesis</keyword>
<keyword id="KW-0274">FAD</keyword>
<keyword id="KW-0285">Flavoprotein</keyword>
<keyword id="KW-0503">Monooxygenase</keyword>
<keyword id="KW-0560">Oxidoreductase</keyword>
<keyword id="KW-1185">Reference proteome</keyword>
<gene>
    <name evidence="5" type="primary">evdC</name>
    <name evidence="5" type="synonym">orf36</name>
    <name evidence="10" type="ORF">MCAG_03664</name>
</gene>
<sequence length="421" mass="44679">MSNLTEERWVAADLRAPLTPAGRTVVDLLAGVIPRISAEAADRDRTGTFPVEAFEQFAKLGLMGATVPAELGGLGLTRLYDVATALMRLAEADASTALAWHVQLSRGLTLTYEWQHGTPPVRAMAERLLRAMAEGEAAVCGALKDAPGVVTELHSDGAGGWLLSGRKVLVSMAPIATHFFVHAQRRDDDGSVFLAVPVVHRDAPGLTVLDNWDGLGMRASGTLEVVFDRCPVRADELLERGPVGARRDAVLAGQTVSSITMLGIYAGIAQAARDIAVGFCAGRGGEPRAGARALVAGLDTRLYALRTTVGAALTNADAASVDLSGDPDERGRRMMTPFQYAKMTVNELAPAVVDDCLSLVGGLAYTAGHPLSRLYRDVRAGGFMQPYSYVDAVDYLSGQALGLDRDNDYMSVRALRSRTSA</sequence>
<organism>
    <name type="scientific">Micromonospora sp. (strain ATCC 39149 / NRRL 15099 / SCC 1413)</name>
    <dbReference type="NCBI Taxonomy" id="219305"/>
    <lineage>
        <taxon>Bacteria</taxon>
        <taxon>Bacillati</taxon>
        <taxon>Actinomycetota</taxon>
        <taxon>Actinomycetes</taxon>
        <taxon>Micromonosporales</taxon>
        <taxon>Micromonosporaceae</taxon>
        <taxon>Micromonospora</taxon>
    </lineage>
</organism>
<protein>
    <recommendedName>
        <fullName evidence="7">L-evernosamine nitrososynthase</fullName>
        <ecNumber evidence="1 2 3">1.14.13.187</ecNumber>
    </recommendedName>
    <alternativeName>
        <fullName evidence="6">FAD-dependent nitrososynthase</fullName>
    </alternativeName>
    <alternativeName>
        <fullName evidence="4">ORF36</fullName>
    </alternativeName>
</protein>
<reference key="1">
    <citation type="submission" date="2009-02" db="EMBL/GenBank/DDBJ databases">
        <title>The genome sequence of Micromonospora carbonacea var. africana strain ATCC 39149.</title>
        <authorList>
            <consortium name="The Broad Institute Genome Sequencing Platform"/>
            <consortium name="Broad Institute Microbial Sequencing Center"/>
            <person name="Fischbach M."/>
            <person name="Godfrey P."/>
            <person name="Ward D."/>
            <person name="Young S."/>
            <person name="Kodira C.D."/>
            <person name="Zeng Q."/>
            <person name="Koehrsen M."/>
            <person name="Alvarado L."/>
            <person name="Berlin A.M."/>
            <person name="Borenstein D."/>
            <person name="Chen Z."/>
            <person name="Engels R."/>
            <person name="Freedman E."/>
            <person name="Gellesch M."/>
            <person name="Goldberg J."/>
            <person name="Griggs A."/>
            <person name="Gujja S."/>
            <person name="Heiman D.I."/>
            <person name="Hepburn T.A."/>
            <person name="Howarth C."/>
            <person name="Jen D."/>
            <person name="Larson L."/>
            <person name="Lewis B."/>
            <person name="Mehta T."/>
            <person name="Park D."/>
            <person name="Pearson M."/>
            <person name="Roberts A."/>
            <person name="Saif S."/>
            <person name="Shea T.D."/>
            <person name="Shenoy N."/>
            <person name="Sisk P."/>
            <person name="Stolte C."/>
            <person name="Sykes S.N."/>
            <person name="Walk T."/>
            <person name="White J."/>
            <person name="Yandava C."/>
            <person name="Straight P."/>
            <person name="Clardy J."/>
            <person name="Hung D."/>
            <person name="Kolter R."/>
            <person name="Mekalanos J."/>
            <person name="Walker S."/>
            <person name="Walsh C.T."/>
            <person name="Wieland-Brown L.C."/>
            <person name="Galagan J."/>
            <person name="Nusbaum C."/>
            <person name="Birren B."/>
        </authorList>
    </citation>
    <scope>NUCLEOTIDE SEQUENCE [LARGE SCALE GENOMIC DNA]</scope>
    <source>
        <strain>ATCC 39149 / NRRL 15099 / SCC 1413</strain>
    </source>
</reference>
<reference key="2">
    <citation type="journal article" date="2008" name="J. Am. Chem. Soc.">
        <title>A unifying nitrososynthase involved in nitrosugar biosynthesis.</title>
        <authorList>
            <person name="Hu Y."/>
            <person name="Al-Mestarihi A."/>
            <person name="Grimes C.L."/>
            <person name="Kahne D."/>
            <person name="Bachmann B.O."/>
        </authorList>
    </citation>
    <scope>NUCLEOTIDE SEQUENCE [GENOMIC DNA] OF 10-421</scope>
    <scope>FUNCTION</scope>
    <scope>CATALYTIC ACTIVITY</scope>
    <scope>COFACTOR</scope>
    <source>
        <strain>ATCC 39149 / NRRL 15099 / SCC 1413</strain>
    </source>
</reference>
<reference key="3">
    <citation type="journal article" date="2013" name="J. Am. Chem. Soc.">
        <title>Nitrososynthase-triggered oxidative carbon-carbon bond cleavage in baumycin biosynthesis.</title>
        <authorList>
            <person name="Al-Mestarihi A."/>
            <person name="Romo A."/>
            <person name="Liu H.W."/>
            <person name="Bachmann B.O."/>
        </authorList>
    </citation>
    <scope>FUNCTION</scope>
    <scope>CATALYTIC ACTIVITY</scope>
    <scope>COFACTOR</scope>
    <source>
        <strain>ATCC 29050</strain>
    </source>
</reference>
<reference key="4">
    <citation type="journal article" date="2013" name="J. Mol. Graph. Model.">
        <title>MD and QM/MM study on catalytic mechanism of a FAD-dependent enzyme ORF36: for nitro sugar biosynthesis.</title>
        <authorList>
            <person name="Li Y."/>
            <person name="Ding L."/>
            <person name="Zhang Q."/>
            <person name="Wang W."/>
        </authorList>
    </citation>
    <scope>MOLECULAR DYNAMICS AND QM/MM SIMULATIONS</scope>
    <scope>REACTION MECHANISM</scope>
</reference>
<reference evidence="11" key="5">
    <citation type="journal article" date="2010" name="Biochemistry">
        <title>Structure and mechanism of ORF36, an amino sugar oxidizing enzyme in everninomicin biosynthesis.</title>
        <authorList>
            <person name="Vey J.L."/>
            <person name="Al-Mestarihi A."/>
            <person name="Hu Y."/>
            <person name="Funk M.A."/>
            <person name="Bachmann B.O."/>
            <person name="Iverson T.M."/>
        </authorList>
    </citation>
    <scope>X-RAY CRYSTALLOGRAPHY (3.15 ANGSTROMS) OF 10-404</scope>
    <scope>FUNCTION</scope>
    <scope>CATALYTIC ACTIVITY</scope>
    <scope>REACTION MECHANISM</scope>
    <scope>COFACTOR</scope>
    <scope>SUBUNIT</scope>
    <source>
        <strain>ATCC 39149 / NRRL 15099 / SCC 1413</strain>
    </source>
</reference>
<dbReference type="EC" id="1.14.13.187" evidence="1 2 3"/>
<dbReference type="EMBL" id="GG657738">
    <property type="protein sequence ID" value="EEP73337.1"/>
    <property type="molecule type" value="Genomic_DNA"/>
</dbReference>
<dbReference type="EMBL" id="EU867494">
    <property type="protein sequence ID" value="ACF94630.1"/>
    <property type="molecule type" value="Genomic_DNA"/>
</dbReference>
<dbReference type="RefSeq" id="WP_007074607.1">
    <property type="nucleotide sequence ID" value="NZ_GG657738.1"/>
</dbReference>
<dbReference type="PDB" id="3MXL">
    <property type="method" value="X-ray"/>
    <property type="resolution" value="3.15 A"/>
    <property type="chains" value="A/B/C/D=10-404"/>
</dbReference>
<dbReference type="PDBsum" id="3MXL"/>
<dbReference type="SMR" id="C4RPA1"/>
<dbReference type="STRING" id="219305.MCAG_03664"/>
<dbReference type="KEGG" id="ag:ACF94630"/>
<dbReference type="eggNOG" id="COG1960">
    <property type="taxonomic scope" value="Bacteria"/>
</dbReference>
<dbReference type="HOGENOM" id="CLU_018204_3_2_11"/>
<dbReference type="OrthoDB" id="2986495at2"/>
<dbReference type="BioCyc" id="MetaCyc:MONOMER-18437"/>
<dbReference type="BRENDA" id="1.14.13.187">
    <property type="organism ID" value="13569"/>
</dbReference>
<dbReference type="EvolutionaryTrace" id="C4RPA1"/>
<dbReference type="Proteomes" id="UP000010307">
    <property type="component" value="Unassembled WGS sequence"/>
</dbReference>
<dbReference type="GO" id="GO:0003995">
    <property type="term" value="F:acyl-CoA dehydrogenase activity"/>
    <property type="evidence" value="ECO:0007669"/>
    <property type="project" value="TreeGrafter"/>
</dbReference>
<dbReference type="GO" id="GO:0050660">
    <property type="term" value="F:flavin adenine dinucleotide binding"/>
    <property type="evidence" value="ECO:0007669"/>
    <property type="project" value="InterPro"/>
</dbReference>
<dbReference type="GO" id="GO:0004497">
    <property type="term" value="F:monooxygenase activity"/>
    <property type="evidence" value="ECO:0007669"/>
    <property type="project" value="UniProtKB-KW"/>
</dbReference>
<dbReference type="GO" id="GO:0017000">
    <property type="term" value="P:antibiotic biosynthetic process"/>
    <property type="evidence" value="ECO:0007669"/>
    <property type="project" value="UniProtKB-KW"/>
</dbReference>
<dbReference type="Gene3D" id="1.10.540.10">
    <property type="entry name" value="Acyl-CoA dehydrogenase/oxidase, N-terminal domain"/>
    <property type="match status" value="1"/>
</dbReference>
<dbReference type="Gene3D" id="2.40.110.10">
    <property type="entry name" value="Butyryl-CoA Dehydrogenase, subunit A, domain 2"/>
    <property type="match status" value="1"/>
</dbReference>
<dbReference type="Gene3D" id="1.20.140.10">
    <property type="entry name" value="Butyryl-CoA Dehydrogenase, subunit A, domain 3"/>
    <property type="match status" value="1"/>
</dbReference>
<dbReference type="InterPro" id="IPR006091">
    <property type="entry name" value="Acyl-CoA_Oxase/DH_mid-dom"/>
</dbReference>
<dbReference type="InterPro" id="IPR046373">
    <property type="entry name" value="Acyl-CoA_Oxase/DH_mid-dom_sf"/>
</dbReference>
<dbReference type="InterPro" id="IPR036250">
    <property type="entry name" value="AcylCo_DH-like_C"/>
</dbReference>
<dbReference type="InterPro" id="IPR009075">
    <property type="entry name" value="AcylCo_DH/oxidase_C"/>
</dbReference>
<dbReference type="InterPro" id="IPR013786">
    <property type="entry name" value="AcylCoA_DH/ox_N"/>
</dbReference>
<dbReference type="InterPro" id="IPR037069">
    <property type="entry name" value="AcylCoA_DH/ox_N_sf"/>
</dbReference>
<dbReference type="InterPro" id="IPR009100">
    <property type="entry name" value="AcylCoA_DH/oxidase_NM_dom_sf"/>
</dbReference>
<dbReference type="PANTHER" id="PTHR43884">
    <property type="entry name" value="ACYL-COA DEHYDROGENASE"/>
    <property type="match status" value="1"/>
</dbReference>
<dbReference type="PANTHER" id="PTHR43884:SF12">
    <property type="entry name" value="ISOVALERYL-COA DEHYDROGENASE, MITOCHONDRIAL-RELATED"/>
    <property type="match status" value="1"/>
</dbReference>
<dbReference type="Pfam" id="PF00441">
    <property type="entry name" value="Acyl-CoA_dh_1"/>
    <property type="match status" value="1"/>
</dbReference>
<dbReference type="Pfam" id="PF02770">
    <property type="entry name" value="Acyl-CoA_dh_M"/>
    <property type="match status" value="1"/>
</dbReference>
<dbReference type="Pfam" id="PF02771">
    <property type="entry name" value="Acyl-CoA_dh_N"/>
    <property type="match status" value="1"/>
</dbReference>
<dbReference type="PIRSF" id="PIRSF016578">
    <property type="entry name" value="HsaA"/>
    <property type="match status" value="1"/>
</dbReference>
<dbReference type="SUPFAM" id="SSF47203">
    <property type="entry name" value="Acyl-CoA dehydrogenase C-terminal domain-like"/>
    <property type="match status" value="1"/>
</dbReference>
<dbReference type="SUPFAM" id="SSF56645">
    <property type="entry name" value="Acyl-CoA dehydrogenase NM domain-like"/>
    <property type="match status" value="1"/>
</dbReference>
<feature type="chain" id="PRO_0000458252" description="L-evernosamine nitrososynthase">
    <location>
        <begin position="1"/>
        <end position="421"/>
    </location>
</feature>
<feature type="strand" evidence="12">
    <location>
        <begin position="13"/>
        <end position="16"/>
    </location>
</feature>
<feature type="helix" evidence="12">
    <location>
        <begin position="20"/>
        <end position="29"/>
    </location>
</feature>
<feature type="turn" evidence="12">
    <location>
        <begin position="30"/>
        <end position="32"/>
    </location>
</feature>
<feature type="helix" evidence="12">
    <location>
        <begin position="33"/>
        <end position="46"/>
    </location>
</feature>
<feature type="helix" evidence="12">
    <location>
        <begin position="51"/>
        <end position="60"/>
    </location>
</feature>
<feature type="helix" evidence="12">
    <location>
        <begin position="62"/>
        <end position="64"/>
    </location>
</feature>
<feature type="turn" evidence="12">
    <location>
        <begin position="69"/>
        <end position="71"/>
    </location>
</feature>
<feature type="helix" evidence="12">
    <location>
        <begin position="79"/>
        <end position="90"/>
    </location>
</feature>
<feature type="helix" evidence="12">
    <location>
        <begin position="94"/>
        <end position="115"/>
    </location>
</feature>
<feature type="helix" evidence="12">
    <location>
        <begin position="119"/>
        <end position="134"/>
    </location>
</feature>
<feature type="strand" evidence="12">
    <location>
        <begin position="152"/>
        <end position="155"/>
    </location>
</feature>
<feature type="strand" evidence="12">
    <location>
        <begin position="157"/>
        <end position="159"/>
    </location>
</feature>
<feature type="strand" evidence="12">
    <location>
        <begin position="161"/>
        <end position="170"/>
    </location>
</feature>
<feature type="helix" evidence="12">
    <location>
        <begin position="173"/>
        <end position="175"/>
    </location>
</feature>
<feature type="strand" evidence="12">
    <location>
        <begin position="177"/>
        <end position="179"/>
    </location>
</feature>
<feature type="strand" evidence="12">
    <location>
        <begin position="183"/>
        <end position="186"/>
    </location>
</feature>
<feature type="strand" evidence="12">
    <location>
        <begin position="192"/>
        <end position="195"/>
    </location>
</feature>
<feature type="strand" evidence="12">
    <location>
        <begin position="206"/>
        <end position="209"/>
    </location>
</feature>
<feature type="strand" evidence="12">
    <location>
        <begin position="214"/>
        <end position="216"/>
    </location>
</feature>
<feature type="strand" evidence="12">
    <location>
        <begin position="223"/>
        <end position="232"/>
    </location>
</feature>
<feature type="helix" evidence="12">
    <location>
        <begin position="234"/>
        <end position="236"/>
    </location>
</feature>
<feature type="strand" evidence="12">
    <location>
        <begin position="239"/>
        <end position="244"/>
    </location>
</feature>
<feature type="helix" evidence="12">
    <location>
        <begin position="250"/>
        <end position="258"/>
    </location>
</feature>
<feature type="helix" evidence="12">
    <location>
        <begin position="259"/>
        <end position="261"/>
    </location>
</feature>
<feature type="helix" evidence="12">
    <location>
        <begin position="262"/>
        <end position="281"/>
    </location>
</feature>
<feature type="helix" evidence="12">
    <location>
        <begin position="289"/>
        <end position="320"/>
    </location>
</feature>
<feature type="helix" evidence="12">
    <location>
        <begin position="329"/>
        <end position="360"/>
    </location>
</feature>
<feature type="helix" evidence="12">
    <location>
        <begin position="362"/>
        <end position="365"/>
    </location>
</feature>
<feature type="helix" evidence="12">
    <location>
        <begin position="370"/>
        <end position="377"/>
    </location>
</feature>
<feature type="helix" evidence="12">
    <location>
        <begin position="378"/>
        <end position="383"/>
    </location>
</feature>
<feature type="helix" evidence="12">
    <location>
        <begin position="389"/>
        <end position="400"/>
    </location>
</feature>